<keyword id="KW-0106">Calcium</keyword>
<keyword id="KW-0119">Carbohydrate metabolism</keyword>
<keyword id="KW-0868">Chloride</keyword>
<keyword id="KW-0903">Direct protein sequencing</keyword>
<keyword id="KW-1015">Disulfide bond</keyword>
<keyword id="KW-0326">Glycosidase</keyword>
<keyword id="KW-0378">Hydrolase</keyword>
<keyword id="KW-0479">Metal-binding</keyword>
<keyword id="KW-0964">Secreted</keyword>
<proteinExistence type="evidence at protein level"/>
<protein>
    <recommendedName>
        <fullName>Alpha-amylase</fullName>
        <ecNumber>3.2.1.1</ecNumber>
    </recommendedName>
    <alternativeName>
        <fullName>1,4-alpha-D-glucan glucanohydrolase</fullName>
    </alternativeName>
</protein>
<evidence type="ECO:0000250" key="1">
    <source>
        <dbReference type="UniProtKB" id="P04746"/>
    </source>
</evidence>
<evidence type="ECO:0000255" key="2"/>
<evidence type="ECO:0000269" key="3">
    <source ref="1"/>
</evidence>
<evidence type="ECO:0000303" key="4">
    <source ref="1"/>
</evidence>
<evidence type="ECO:0000305" key="5"/>
<feature type="chain" id="PRO_0000343463" description="Alpha-amylase">
    <location>
        <begin position="1"/>
        <end position="38" status="greater than"/>
    </location>
</feature>
<feature type="disulfide bond" evidence="1">
    <location>
        <begin position="29"/>
        <end status="unknown"/>
    </location>
</feature>
<feature type="non-terminal residue" evidence="4">
    <location>
        <position position="38"/>
    </location>
</feature>
<organism>
    <name type="scientific">Tityus serrulatus</name>
    <name type="common">Brazilian scorpion</name>
    <dbReference type="NCBI Taxonomy" id="6887"/>
    <lineage>
        <taxon>Eukaryota</taxon>
        <taxon>Metazoa</taxon>
        <taxon>Ecdysozoa</taxon>
        <taxon>Arthropoda</taxon>
        <taxon>Chelicerata</taxon>
        <taxon>Arachnida</taxon>
        <taxon>Scorpiones</taxon>
        <taxon>Buthida</taxon>
        <taxon>Buthoidea</taxon>
        <taxon>Buthidae</taxon>
        <taxon>Tityus</taxon>
    </lineage>
</organism>
<sequence length="38" mass="4619">KYYEPNTVQGRSVIVHLFEWRWKDVADECEQFLSPKGY</sequence>
<dbReference type="EC" id="3.2.1.1"/>
<dbReference type="SMR" id="P85843"/>
<dbReference type="GO" id="GO:0005576">
    <property type="term" value="C:extracellular region"/>
    <property type="evidence" value="ECO:0007669"/>
    <property type="project" value="UniProtKB-SubCell"/>
</dbReference>
<dbReference type="GO" id="GO:0004556">
    <property type="term" value="F:alpha-amylase activity"/>
    <property type="evidence" value="ECO:0007669"/>
    <property type="project" value="UniProtKB-EC"/>
</dbReference>
<dbReference type="GO" id="GO:0046872">
    <property type="term" value="F:metal ion binding"/>
    <property type="evidence" value="ECO:0007669"/>
    <property type="project" value="UniProtKB-KW"/>
</dbReference>
<dbReference type="Gene3D" id="3.20.20.80">
    <property type="entry name" value="Glycosidases"/>
    <property type="match status" value="1"/>
</dbReference>
<accession>P85843</accession>
<name>AMY_TITSE</name>
<comment type="catalytic activity">
    <reaction>
        <text>Endohydrolysis of (1-&gt;4)-alpha-D-glucosidic linkages in polysaccharides containing three or more (1-&gt;4)-alpha-linked D-glucose units.</text>
        <dbReference type="EC" id="3.2.1.1"/>
    </reaction>
</comment>
<comment type="cofactor">
    <cofactor evidence="1">
        <name>Ca(2+)</name>
        <dbReference type="ChEBI" id="CHEBI:29108"/>
    </cofactor>
    <text evidence="1">Binds 1 Ca(2+) ion per subunit.</text>
</comment>
<comment type="cofactor">
    <cofactor evidence="1">
        <name>chloride</name>
        <dbReference type="ChEBI" id="CHEBI:17996"/>
    </cofactor>
    <text evidence="1">Binds 1 Cl(-) ion per subunit.</text>
</comment>
<comment type="subunit">
    <text evidence="1">Monomer.</text>
</comment>
<comment type="subcellular location">
    <subcellularLocation>
        <location evidence="3">Secreted</location>
    </subcellularLocation>
</comment>
<comment type="tissue specificity">
    <text evidence="3">Expressed by the venom gland.</text>
</comment>
<comment type="similarity">
    <text evidence="2">Belongs to the glycosyl hydrolase 13 family.</text>
</comment>
<reference evidence="5" key="1">
    <citation type="submission" date="2008-05" db="UniProtKB">
        <title>Alpha-amylase from venom of Brazilian spider Tityus serrulatus.</title>
        <authorList>
            <person name="Richardson M."/>
            <person name="Borges M.H."/>
            <person name="Cordeiro M.N."/>
            <person name="Pimenta A.M.C."/>
            <person name="de Lima M.E."/>
            <person name="Rates B."/>
        </authorList>
    </citation>
    <scope>PROTEIN SEQUENCE</scope>
    <scope>SUBCELLULAR LOCATION</scope>
    <scope>TISSUE SPECIFICITY</scope>
    <source>
        <tissue evidence="3">Venom</tissue>
    </source>
</reference>